<accession>B7IN64</accession>
<evidence type="ECO:0000255" key="1">
    <source>
        <dbReference type="HAMAP-Rule" id="MF_00593"/>
    </source>
</evidence>
<reference key="1">
    <citation type="submission" date="2008-10" db="EMBL/GenBank/DDBJ databases">
        <title>Genome sequence of Bacillus cereus G9842.</title>
        <authorList>
            <person name="Dodson R.J."/>
            <person name="Durkin A.S."/>
            <person name="Rosovitz M.J."/>
            <person name="Rasko D.A."/>
            <person name="Hoffmaster A."/>
            <person name="Ravel J."/>
            <person name="Sutton G."/>
        </authorList>
    </citation>
    <scope>NUCLEOTIDE SEQUENCE [LARGE SCALE GENOMIC DNA]</scope>
    <source>
        <strain>G9842</strain>
    </source>
</reference>
<sequence>MKLLELIEKWAIETPDQTAFVWRDAKITYKQLKEDSDALAHWISSAYPDDRSPIMVYGHMQPEMIINFLGCVKAGHAYIPVDLSIPADRVQRIAENSGAKLLLSAAAVTVTDLPVRIVSEDNLKDIFFTHKGNTPNPEHAVKGDENFYIIYTSGSTGNPKGVQITYNCLVSFTKWAVEDFNLQTGQVFLNQAPFSFDLSVMDIYPSLVTGGTLWAIDKDMIARPKDLFASLEQSDIQVWTSTPSFAEMCLMEASFSESMLPNMKTFLFCGEVLPNEVARKLIERFPNATIMNTYGPTEATVAVTGIHVTEEVLDQYKSLPVGYCKSDCRLLIMKEDGTIAPDGEKGEIVIVGPSVSVGYLGSPELTEKAFTMIDGERAYKTGDAGYVENGLLFYNGRLDFQIKLHGYRMELEEIEHHLRACSYVEGAVIVPIKKGEKYDYLLAVVVPGEHSFEKEFKLTSAIKKELNERLPNYMIPRKFMYQSSIPMTPNGKVDRKKLLSEVTA</sequence>
<dbReference type="EC" id="6.2.1.54" evidence="1"/>
<dbReference type="EMBL" id="CP001186">
    <property type="protein sequence ID" value="ACK94721.1"/>
    <property type="molecule type" value="Genomic_DNA"/>
</dbReference>
<dbReference type="RefSeq" id="WP_000770497.1">
    <property type="nucleotide sequence ID" value="NC_011772.1"/>
</dbReference>
<dbReference type="SMR" id="B7IN64"/>
<dbReference type="KEGG" id="bcg:BCG9842_B3920"/>
<dbReference type="HOGENOM" id="CLU_000022_2_12_9"/>
<dbReference type="UniPathway" id="UPA00556"/>
<dbReference type="Proteomes" id="UP000006744">
    <property type="component" value="Chromosome"/>
</dbReference>
<dbReference type="GO" id="GO:0005737">
    <property type="term" value="C:cytoplasm"/>
    <property type="evidence" value="ECO:0007669"/>
    <property type="project" value="UniProtKB-SubCell"/>
</dbReference>
<dbReference type="GO" id="GO:0005524">
    <property type="term" value="F:ATP binding"/>
    <property type="evidence" value="ECO:0007669"/>
    <property type="project" value="UniProtKB-KW"/>
</dbReference>
<dbReference type="GO" id="GO:0047473">
    <property type="term" value="F:D-alanine [D-alanyl carrier protein] ligase activity"/>
    <property type="evidence" value="ECO:0007669"/>
    <property type="project" value="UniProtKB-UniRule"/>
</dbReference>
<dbReference type="GO" id="GO:0070395">
    <property type="term" value="P:lipoteichoic acid biosynthetic process"/>
    <property type="evidence" value="ECO:0007669"/>
    <property type="project" value="UniProtKB-UniRule"/>
</dbReference>
<dbReference type="CDD" id="cd05945">
    <property type="entry name" value="DltA"/>
    <property type="match status" value="1"/>
</dbReference>
<dbReference type="FunFam" id="3.30.300.30:FF:000012">
    <property type="entry name" value="D-alanine--D-alanyl carrier protein ligase"/>
    <property type="match status" value="1"/>
</dbReference>
<dbReference type="FunFam" id="3.40.50.12780:FF:000015">
    <property type="entry name" value="D-alanine--D-alanyl carrier protein ligase"/>
    <property type="match status" value="1"/>
</dbReference>
<dbReference type="Gene3D" id="3.30.300.30">
    <property type="match status" value="1"/>
</dbReference>
<dbReference type="Gene3D" id="3.40.50.12780">
    <property type="entry name" value="N-terminal domain of ligase-like"/>
    <property type="match status" value="1"/>
</dbReference>
<dbReference type="HAMAP" id="MF_00593">
    <property type="entry name" value="DltA"/>
    <property type="match status" value="1"/>
</dbReference>
<dbReference type="InterPro" id="IPR010071">
    <property type="entry name" value="AA_adenyl_dom"/>
</dbReference>
<dbReference type="InterPro" id="IPR025110">
    <property type="entry name" value="AMP-bd_C"/>
</dbReference>
<dbReference type="InterPro" id="IPR045851">
    <property type="entry name" value="AMP-bd_C_sf"/>
</dbReference>
<dbReference type="InterPro" id="IPR020845">
    <property type="entry name" value="AMP-binding_CS"/>
</dbReference>
<dbReference type="InterPro" id="IPR000873">
    <property type="entry name" value="AMP-dep_synth/lig_dom"/>
</dbReference>
<dbReference type="InterPro" id="IPR042099">
    <property type="entry name" value="ANL_N_sf"/>
</dbReference>
<dbReference type="InterPro" id="IPR010072">
    <property type="entry name" value="DltA"/>
</dbReference>
<dbReference type="InterPro" id="IPR044507">
    <property type="entry name" value="DltA-like"/>
</dbReference>
<dbReference type="NCBIfam" id="TIGR01733">
    <property type="entry name" value="AA-adenyl-dom"/>
    <property type="match status" value="1"/>
</dbReference>
<dbReference type="NCBIfam" id="TIGR01734">
    <property type="entry name" value="D-ala-DACP-lig"/>
    <property type="match status" value="1"/>
</dbReference>
<dbReference type="NCBIfam" id="NF003417">
    <property type="entry name" value="PRK04813.1"/>
    <property type="match status" value="1"/>
</dbReference>
<dbReference type="PANTHER" id="PTHR45398">
    <property type="match status" value="1"/>
</dbReference>
<dbReference type="PANTHER" id="PTHR45398:SF1">
    <property type="entry name" value="ENZYME, PUTATIVE (JCVI)-RELATED"/>
    <property type="match status" value="1"/>
</dbReference>
<dbReference type="Pfam" id="PF00501">
    <property type="entry name" value="AMP-binding"/>
    <property type="match status" value="1"/>
</dbReference>
<dbReference type="Pfam" id="PF13193">
    <property type="entry name" value="AMP-binding_C"/>
    <property type="match status" value="1"/>
</dbReference>
<dbReference type="SUPFAM" id="SSF56801">
    <property type="entry name" value="Acetyl-CoA synthetase-like"/>
    <property type="match status" value="1"/>
</dbReference>
<dbReference type="PROSITE" id="PS00455">
    <property type="entry name" value="AMP_BINDING"/>
    <property type="match status" value="1"/>
</dbReference>
<keyword id="KW-0067">ATP-binding</keyword>
<keyword id="KW-0963">Cytoplasm</keyword>
<keyword id="KW-0436">Ligase</keyword>
<keyword id="KW-0547">Nucleotide-binding</keyword>
<name>DLTA_BACC2</name>
<comment type="function">
    <text evidence="1">Catalyzes the first step in the D-alanylation of lipoteichoic acid (LTA), the activation of D-alanine and its transfer onto the D-alanyl carrier protein (Dcp) DltC. In an ATP-dependent two-step reaction, forms a high energy D-alanyl-AMP intermediate, followed by transfer of the D-alanyl residue as a thiol ester to the phosphopantheinyl prosthetic group of the Dcp. D-alanylation of LTA plays an important role in modulating the properties of the cell wall in Gram-positive bacteria, influencing the net charge of the cell wall.</text>
</comment>
<comment type="catalytic activity">
    <reaction evidence="1">
        <text>holo-[D-alanyl-carrier protein] + D-alanine + ATP = D-alanyl-[D-alanyl-carrier protein] + AMP + diphosphate</text>
        <dbReference type="Rhea" id="RHEA:55132"/>
        <dbReference type="Rhea" id="RHEA-COMP:14102"/>
        <dbReference type="Rhea" id="RHEA-COMP:14103"/>
        <dbReference type="ChEBI" id="CHEBI:30616"/>
        <dbReference type="ChEBI" id="CHEBI:33019"/>
        <dbReference type="ChEBI" id="CHEBI:57416"/>
        <dbReference type="ChEBI" id="CHEBI:64479"/>
        <dbReference type="ChEBI" id="CHEBI:138620"/>
        <dbReference type="ChEBI" id="CHEBI:456215"/>
        <dbReference type="EC" id="6.2.1.54"/>
    </reaction>
</comment>
<comment type="pathway">
    <text evidence="1">Cell wall biogenesis; lipoteichoic acid biosynthesis.</text>
</comment>
<comment type="subcellular location">
    <subcellularLocation>
        <location evidence="1">Cytoplasm</location>
    </subcellularLocation>
</comment>
<comment type="similarity">
    <text evidence="1">Belongs to the ATP-dependent AMP-binding enzyme family. DltA subfamily.</text>
</comment>
<feature type="chain" id="PRO_1000129818" description="D-alanine--D-alanyl carrier protein ligase">
    <location>
        <begin position="1"/>
        <end position="504"/>
    </location>
</feature>
<feature type="binding site" evidence="1">
    <location>
        <begin position="152"/>
        <end position="153"/>
    </location>
    <ligand>
        <name>ATP</name>
        <dbReference type="ChEBI" id="CHEBI:30616"/>
    </ligand>
</feature>
<feature type="binding site" evidence="1">
    <location>
        <position position="197"/>
    </location>
    <ligand>
        <name>D-alanine</name>
        <dbReference type="ChEBI" id="CHEBI:57416"/>
    </ligand>
</feature>
<feature type="binding site" evidence="1">
    <location>
        <begin position="292"/>
        <end position="297"/>
    </location>
    <ligand>
        <name>ATP</name>
        <dbReference type="ChEBI" id="CHEBI:30616"/>
    </ligand>
</feature>
<feature type="binding site" evidence="1">
    <location>
        <position position="301"/>
    </location>
    <ligand>
        <name>D-alanine</name>
        <dbReference type="ChEBI" id="CHEBI:57416"/>
    </ligand>
</feature>
<feature type="binding site" evidence="1">
    <location>
        <position position="383"/>
    </location>
    <ligand>
        <name>ATP</name>
        <dbReference type="ChEBI" id="CHEBI:30616"/>
    </ligand>
</feature>
<feature type="binding site" evidence="1">
    <location>
        <begin position="394"/>
        <end position="397"/>
    </location>
    <ligand>
        <name>ATP</name>
        <dbReference type="ChEBI" id="CHEBI:30616"/>
    </ligand>
</feature>
<feature type="binding site" evidence="1">
    <location>
        <position position="492"/>
    </location>
    <ligand>
        <name>ATP</name>
        <dbReference type="ChEBI" id="CHEBI:30616"/>
    </ligand>
</feature>
<feature type="binding site" evidence="1">
    <location>
        <position position="492"/>
    </location>
    <ligand>
        <name>D-alanine</name>
        <dbReference type="ChEBI" id="CHEBI:57416"/>
    </ligand>
</feature>
<organism>
    <name type="scientific">Bacillus cereus (strain G9842)</name>
    <dbReference type="NCBI Taxonomy" id="405531"/>
    <lineage>
        <taxon>Bacteria</taxon>
        <taxon>Bacillati</taxon>
        <taxon>Bacillota</taxon>
        <taxon>Bacilli</taxon>
        <taxon>Bacillales</taxon>
        <taxon>Bacillaceae</taxon>
        <taxon>Bacillus</taxon>
        <taxon>Bacillus cereus group</taxon>
    </lineage>
</organism>
<gene>
    <name evidence="1" type="primary">dltA</name>
    <name type="ordered locus">BCG9842_B3920</name>
</gene>
<proteinExistence type="inferred from homology"/>
<protein>
    <recommendedName>
        <fullName evidence="1">D-alanine--D-alanyl carrier protein ligase</fullName>
        <shortName evidence="1">DCL</shortName>
        <ecNumber evidence="1">6.2.1.54</ecNumber>
    </recommendedName>
    <alternativeName>
        <fullName evidence="1">D-alanine--poly(phosphoribitol) ligase subunit 1</fullName>
    </alternativeName>
    <alternativeName>
        <fullName evidence="1">D-alanine-activating enzyme</fullName>
        <shortName evidence="1">DAE</shortName>
    </alternativeName>
</protein>